<sequence length="282" mass="31543">MAGKHGRNGFEDDDVNPFAGGSVPPANNSRLPPLSHEPADFYNVDIPLDSSKDLKKKEKELQAMEAELNKRERELKRKEEAAAQAGIVIEDKNWPPFFPLIHHNISNEIPIHLQRMQYLAFSSFLGLAACLFWNIIATTTAWVKGEGVIIWLLAIIYFISGVPGAYVLWYRPLYNAMRTESALKFGWFFLFYLIHIIFCVWAAVAPPFPFKGKSLAGILPAIDVIGRSAIVGIFYFVGFGLFCLESLLSIGVIQQVYMYFRGSGKAAEMKREAARGALSSAF</sequence>
<comment type="function">
    <text evidence="1">Probably involved in membrane trafficking.</text>
</comment>
<comment type="subcellular location">
    <subcellularLocation>
        <location evidence="1">Cell membrane</location>
        <topology evidence="1">Multi-pass membrane protein</topology>
    </subcellularLocation>
    <subcellularLocation>
        <location evidence="1">Cytoplasmic vesicle</location>
        <location evidence="1">Secretory vesicle membrane</location>
        <topology evidence="1">Multi-pass membrane protein</topology>
    </subcellularLocation>
</comment>
<comment type="similarity">
    <text evidence="4">Belongs to the SCAMP family.</text>
</comment>
<proteinExistence type="evidence at transcript level"/>
<name>SCAM3_ORYSJ</name>
<organism>
    <name type="scientific">Oryza sativa subsp. japonica</name>
    <name type="common">Rice</name>
    <dbReference type="NCBI Taxonomy" id="39947"/>
    <lineage>
        <taxon>Eukaryota</taxon>
        <taxon>Viridiplantae</taxon>
        <taxon>Streptophyta</taxon>
        <taxon>Embryophyta</taxon>
        <taxon>Tracheophyta</taxon>
        <taxon>Spermatophyta</taxon>
        <taxon>Magnoliopsida</taxon>
        <taxon>Liliopsida</taxon>
        <taxon>Poales</taxon>
        <taxon>Poaceae</taxon>
        <taxon>BOP clade</taxon>
        <taxon>Oryzoideae</taxon>
        <taxon>Oryzeae</taxon>
        <taxon>Oryzinae</taxon>
        <taxon>Oryza</taxon>
        <taxon>Oryza sativa</taxon>
    </lineage>
</organism>
<protein>
    <recommendedName>
        <fullName>Secretory carrier-associated membrane protein 3</fullName>
        <shortName>Secretory carrier membrane protein 3</shortName>
    </recommendedName>
</protein>
<reference key="1">
    <citation type="journal article" date="2005" name="Mol. Genet. Genomics">
        <title>A fine physical map of the rice chromosome 5.</title>
        <authorList>
            <person name="Cheng C.-H."/>
            <person name="Chung M.C."/>
            <person name="Liu S.-M."/>
            <person name="Chen S.-K."/>
            <person name="Kao F.Y."/>
            <person name="Lin S.-J."/>
            <person name="Hsiao S.-H."/>
            <person name="Tseng I.C."/>
            <person name="Hsing Y.-I.C."/>
            <person name="Wu H.-P."/>
            <person name="Chen C.-S."/>
            <person name="Shaw J.-F."/>
            <person name="Wu J."/>
            <person name="Matsumoto T."/>
            <person name="Sasaki T."/>
            <person name="Chen H.-C."/>
            <person name="Chow T.-Y."/>
        </authorList>
    </citation>
    <scope>NUCLEOTIDE SEQUENCE [LARGE SCALE GENOMIC DNA]</scope>
    <source>
        <strain>cv. Nipponbare</strain>
    </source>
</reference>
<reference key="2">
    <citation type="journal article" date="2005" name="Nature">
        <title>The map-based sequence of the rice genome.</title>
        <authorList>
            <consortium name="International rice genome sequencing project (IRGSP)"/>
        </authorList>
    </citation>
    <scope>NUCLEOTIDE SEQUENCE [LARGE SCALE GENOMIC DNA]</scope>
    <source>
        <strain>cv. Nipponbare</strain>
    </source>
</reference>
<reference key="3">
    <citation type="journal article" date="2008" name="Nucleic Acids Res.">
        <title>The rice annotation project database (RAP-DB): 2008 update.</title>
        <authorList>
            <consortium name="The rice annotation project (RAP)"/>
        </authorList>
    </citation>
    <scope>GENOME REANNOTATION</scope>
    <source>
        <strain>cv. Nipponbare</strain>
    </source>
</reference>
<reference key="4">
    <citation type="journal article" date="2013" name="Rice">
        <title>Improvement of the Oryza sativa Nipponbare reference genome using next generation sequence and optical map data.</title>
        <authorList>
            <person name="Kawahara Y."/>
            <person name="de la Bastide M."/>
            <person name="Hamilton J.P."/>
            <person name="Kanamori H."/>
            <person name="McCombie W.R."/>
            <person name="Ouyang S."/>
            <person name="Schwartz D.C."/>
            <person name="Tanaka T."/>
            <person name="Wu J."/>
            <person name="Zhou S."/>
            <person name="Childs K.L."/>
            <person name="Davidson R.M."/>
            <person name="Lin H."/>
            <person name="Quesada-Ocampo L."/>
            <person name="Vaillancourt B."/>
            <person name="Sakai H."/>
            <person name="Lee S.S."/>
            <person name="Kim J."/>
            <person name="Numa H."/>
            <person name="Itoh T."/>
            <person name="Buell C.R."/>
            <person name="Matsumoto T."/>
        </authorList>
    </citation>
    <scope>GENOME REANNOTATION</scope>
    <source>
        <strain>cv. Nipponbare</strain>
    </source>
</reference>
<reference key="5">
    <citation type="journal article" date="2005" name="PLoS Biol.">
        <title>The genomes of Oryza sativa: a history of duplications.</title>
        <authorList>
            <person name="Yu J."/>
            <person name="Wang J."/>
            <person name="Lin W."/>
            <person name="Li S."/>
            <person name="Li H."/>
            <person name="Zhou J."/>
            <person name="Ni P."/>
            <person name="Dong W."/>
            <person name="Hu S."/>
            <person name="Zeng C."/>
            <person name="Zhang J."/>
            <person name="Zhang Y."/>
            <person name="Li R."/>
            <person name="Xu Z."/>
            <person name="Li S."/>
            <person name="Li X."/>
            <person name="Zheng H."/>
            <person name="Cong L."/>
            <person name="Lin L."/>
            <person name="Yin J."/>
            <person name="Geng J."/>
            <person name="Li G."/>
            <person name="Shi J."/>
            <person name="Liu J."/>
            <person name="Lv H."/>
            <person name="Li J."/>
            <person name="Wang J."/>
            <person name="Deng Y."/>
            <person name="Ran L."/>
            <person name="Shi X."/>
            <person name="Wang X."/>
            <person name="Wu Q."/>
            <person name="Li C."/>
            <person name="Ren X."/>
            <person name="Wang J."/>
            <person name="Wang X."/>
            <person name="Li D."/>
            <person name="Liu D."/>
            <person name="Zhang X."/>
            <person name="Ji Z."/>
            <person name="Zhao W."/>
            <person name="Sun Y."/>
            <person name="Zhang Z."/>
            <person name="Bao J."/>
            <person name="Han Y."/>
            <person name="Dong L."/>
            <person name="Ji J."/>
            <person name="Chen P."/>
            <person name="Wu S."/>
            <person name="Liu J."/>
            <person name="Xiao Y."/>
            <person name="Bu D."/>
            <person name="Tan J."/>
            <person name="Yang L."/>
            <person name="Ye C."/>
            <person name="Zhang J."/>
            <person name="Xu J."/>
            <person name="Zhou Y."/>
            <person name="Yu Y."/>
            <person name="Zhang B."/>
            <person name="Zhuang S."/>
            <person name="Wei H."/>
            <person name="Liu B."/>
            <person name="Lei M."/>
            <person name="Yu H."/>
            <person name="Li Y."/>
            <person name="Xu H."/>
            <person name="Wei S."/>
            <person name="He X."/>
            <person name="Fang L."/>
            <person name="Zhang Z."/>
            <person name="Zhang Y."/>
            <person name="Huang X."/>
            <person name="Su Z."/>
            <person name="Tong W."/>
            <person name="Li J."/>
            <person name="Tong Z."/>
            <person name="Li S."/>
            <person name="Ye J."/>
            <person name="Wang L."/>
            <person name="Fang L."/>
            <person name="Lei T."/>
            <person name="Chen C.-S."/>
            <person name="Chen H.-C."/>
            <person name="Xu Z."/>
            <person name="Li H."/>
            <person name="Huang H."/>
            <person name="Zhang F."/>
            <person name="Xu H."/>
            <person name="Li N."/>
            <person name="Zhao C."/>
            <person name="Li S."/>
            <person name="Dong L."/>
            <person name="Huang Y."/>
            <person name="Li L."/>
            <person name="Xi Y."/>
            <person name="Qi Q."/>
            <person name="Li W."/>
            <person name="Zhang B."/>
            <person name="Hu W."/>
            <person name="Zhang Y."/>
            <person name="Tian X."/>
            <person name="Jiao Y."/>
            <person name="Liang X."/>
            <person name="Jin J."/>
            <person name="Gao L."/>
            <person name="Zheng W."/>
            <person name="Hao B."/>
            <person name="Liu S.-M."/>
            <person name="Wang W."/>
            <person name="Yuan L."/>
            <person name="Cao M."/>
            <person name="McDermott J."/>
            <person name="Samudrala R."/>
            <person name="Wang J."/>
            <person name="Wong G.K.-S."/>
            <person name="Yang H."/>
        </authorList>
    </citation>
    <scope>NUCLEOTIDE SEQUENCE [LARGE SCALE GENOMIC DNA]</scope>
    <source>
        <strain>cv. Nipponbare</strain>
    </source>
</reference>
<reference key="6">
    <citation type="journal article" date="2003" name="Science">
        <title>Collection, mapping, and annotation of over 28,000 cDNA clones from japonica rice.</title>
        <authorList>
            <consortium name="The rice full-length cDNA consortium"/>
        </authorList>
    </citation>
    <scope>NUCLEOTIDE SEQUENCE [LARGE SCALE MRNA]</scope>
    <source>
        <strain>cv. Nipponbare</strain>
    </source>
</reference>
<evidence type="ECO:0000250" key="1"/>
<evidence type="ECO:0000255" key="2"/>
<evidence type="ECO:0000256" key="3">
    <source>
        <dbReference type="SAM" id="MobiDB-lite"/>
    </source>
</evidence>
<evidence type="ECO:0000305" key="4"/>
<evidence type="ECO:0000312" key="5">
    <source>
        <dbReference type="EMBL" id="EEE64275.1"/>
    </source>
</evidence>
<accession>Q60EA5</accession>
<accession>A3B5L5</accession>
<accession>B7EVJ1</accession>
<feature type="chain" id="PRO_0000304908" description="Secretory carrier-associated membrane protein 3">
    <location>
        <begin position="1"/>
        <end position="282"/>
    </location>
</feature>
<feature type="topological domain" description="Cytoplasmic" evidence="2">
    <location>
        <begin position="1"/>
        <end position="117"/>
    </location>
</feature>
<feature type="transmembrane region" description="Helical" evidence="2">
    <location>
        <begin position="118"/>
        <end position="138"/>
    </location>
</feature>
<feature type="transmembrane region" description="Helical" evidence="2">
    <location>
        <begin position="148"/>
        <end position="168"/>
    </location>
</feature>
<feature type="transmembrane region" description="Helical" evidence="2">
    <location>
        <begin position="185"/>
        <end position="205"/>
    </location>
</feature>
<feature type="transmembrane region" description="Helical" evidence="2">
    <location>
        <begin position="230"/>
        <end position="250"/>
    </location>
</feature>
<feature type="topological domain" description="Cytoplasmic" evidence="2">
    <location>
        <begin position="251"/>
        <end position="282"/>
    </location>
</feature>
<feature type="region of interest" description="Disordered" evidence="3">
    <location>
        <begin position="1"/>
        <end position="36"/>
    </location>
</feature>
<feature type="coiled-coil region" evidence="2">
    <location>
        <begin position="48"/>
        <end position="92"/>
    </location>
</feature>
<dbReference type="EMBL" id="AC130597">
    <property type="protein sequence ID" value="AAU90239.1"/>
    <property type="molecule type" value="Genomic_DNA"/>
</dbReference>
<dbReference type="EMBL" id="AC135917">
    <property type="protein sequence ID" value="AAU90243.1"/>
    <property type="molecule type" value="Genomic_DNA"/>
</dbReference>
<dbReference type="EMBL" id="AP008211">
    <property type="protein sequence ID" value="BAF17891.1"/>
    <property type="molecule type" value="Genomic_DNA"/>
</dbReference>
<dbReference type="EMBL" id="AP014961">
    <property type="protein sequence ID" value="BAS94781.1"/>
    <property type="molecule type" value="Genomic_DNA"/>
</dbReference>
<dbReference type="EMBL" id="CM000142">
    <property type="protein sequence ID" value="EEE64275.1"/>
    <property type="molecule type" value="Genomic_DNA"/>
</dbReference>
<dbReference type="EMBL" id="AK104049">
    <property type="protein sequence ID" value="BAG96388.1"/>
    <property type="molecule type" value="mRNA"/>
</dbReference>
<dbReference type="RefSeq" id="XP_015637396.1">
    <property type="nucleotide sequence ID" value="XM_015781910.1"/>
</dbReference>
<dbReference type="SMR" id="Q60EA5"/>
<dbReference type="FunCoup" id="Q60EA5">
    <property type="interactions" value="993"/>
</dbReference>
<dbReference type="PaxDb" id="39947-Q60EA5"/>
<dbReference type="EnsemblPlants" id="Os05t0503000-01">
    <property type="protein sequence ID" value="Os05t0503000-01"/>
    <property type="gene ID" value="Os05g0503000"/>
</dbReference>
<dbReference type="Gramene" id="Os05t0503000-01">
    <property type="protein sequence ID" value="Os05t0503000-01"/>
    <property type="gene ID" value="Os05g0503000"/>
</dbReference>
<dbReference type="KEGG" id="dosa:Os05g0503000"/>
<dbReference type="eggNOG" id="KOG3088">
    <property type="taxonomic scope" value="Eukaryota"/>
</dbReference>
<dbReference type="HOGENOM" id="CLU_066546_3_0_1"/>
<dbReference type="InParanoid" id="Q60EA5"/>
<dbReference type="OMA" id="GAELSCH"/>
<dbReference type="OrthoDB" id="242866at2759"/>
<dbReference type="Proteomes" id="UP000000763">
    <property type="component" value="Chromosome 5"/>
</dbReference>
<dbReference type="Proteomes" id="UP000007752">
    <property type="component" value="Chromosome 5"/>
</dbReference>
<dbReference type="Proteomes" id="UP000059680">
    <property type="component" value="Chromosome 5"/>
</dbReference>
<dbReference type="GO" id="GO:0005886">
    <property type="term" value="C:plasma membrane"/>
    <property type="evidence" value="ECO:0007669"/>
    <property type="project" value="UniProtKB-SubCell"/>
</dbReference>
<dbReference type="GO" id="GO:0055038">
    <property type="term" value="C:recycling endosome membrane"/>
    <property type="evidence" value="ECO:0000318"/>
    <property type="project" value="GO_Central"/>
</dbReference>
<dbReference type="GO" id="GO:0032588">
    <property type="term" value="C:trans-Golgi network membrane"/>
    <property type="evidence" value="ECO:0000318"/>
    <property type="project" value="GO_Central"/>
</dbReference>
<dbReference type="GO" id="GO:0030658">
    <property type="term" value="C:transport vesicle membrane"/>
    <property type="evidence" value="ECO:0007669"/>
    <property type="project" value="UniProtKB-SubCell"/>
</dbReference>
<dbReference type="GO" id="GO:0015031">
    <property type="term" value="P:protein transport"/>
    <property type="evidence" value="ECO:0000318"/>
    <property type="project" value="GO_Central"/>
</dbReference>
<dbReference type="InterPro" id="IPR007273">
    <property type="entry name" value="SCAMP"/>
</dbReference>
<dbReference type="PANTHER" id="PTHR10687:SF47">
    <property type="entry name" value="SECRETORY CARRIER-ASSOCIATED MEMBRANE PROTEIN 3"/>
    <property type="match status" value="1"/>
</dbReference>
<dbReference type="PANTHER" id="PTHR10687">
    <property type="entry name" value="SECRETORY CARRIER-ASSOCIATED MEMBRANE PROTEIN SCAMP"/>
    <property type="match status" value="1"/>
</dbReference>
<dbReference type="Pfam" id="PF04144">
    <property type="entry name" value="SCAMP"/>
    <property type="match status" value="1"/>
</dbReference>
<gene>
    <name type="primary">SCAMP3</name>
    <name type="ordered locus">Os05g0503000</name>
    <name type="ordered locus">LOC_Os05g42330</name>
    <name evidence="5" type="ORF">OsJ_19111</name>
    <name type="ORF">OSJNBa0017K09.16</name>
    <name type="ORF">OSJNBb0048K05.1</name>
</gene>
<keyword id="KW-1003">Cell membrane</keyword>
<keyword id="KW-0175">Coiled coil</keyword>
<keyword id="KW-0968">Cytoplasmic vesicle</keyword>
<keyword id="KW-0472">Membrane</keyword>
<keyword id="KW-1185">Reference proteome</keyword>
<keyword id="KW-0812">Transmembrane</keyword>
<keyword id="KW-1133">Transmembrane helix</keyword>
<keyword id="KW-0813">Transport</keyword>